<reference key="1">
    <citation type="journal article" date="2003" name="Proc. Natl. Acad. Sci. U.S.A.">
        <title>The complete genome sequence of Mycobacterium bovis.</title>
        <authorList>
            <person name="Garnier T."/>
            <person name="Eiglmeier K."/>
            <person name="Camus J.-C."/>
            <person name="Medina N."/>
            <person name="Mansoor H."/>
            <person name="Pryor M."/>
            <person name="Duthoy S."/>
            <person name="Grondin S."/>
            <person name="Lacroix C."/>
            <person name="Monsempe C."/>
            <person name="Simon S."/>
            <person name="Harris B."/>
            <person name="Atkin R."/>
            <person name="Doggett J."/>
            <person name="Mayes R."/>
            <person name="Keating L."/>
            <person name="Wheeler P.R."/>
            <person name="Parkhill J."/>
            <person name="Barrell B.G."/>
            <person name="Cole S.T."/>
            <person name="Gordon S.V."/>
            <person name="Hewinson R.G."/>
        </authorList>
    </citation>
    <scope>NUCLEOTIDE SEQUENCE [LARGE SCALE GENOMIC DNA]</scope>
    <source>
        <strain>ATCC BAA-935 / AF2122/97</strain>
    </source>
</reference>
<reference key="2">
    <citation type="journal article" date="2017" name="Genome Announc.">
        <title>Updated reference genome sequence and annotation of Mycobacterium bovis AF2122/97.</title>
        <authorList>
            <person name="Malone K.M."/>
            <person name="Farrell D."/>
            <person name="Stuber T.P."/>
            <person name="Schubert O.T."/>
            <person name="Aebersold R."/>
            <person name="Robbe-Austerman S."/>
            <person name="Gordon S.V."/>
        </authorList>
    </citation>
    <scope>NUCLEOTIDE SEQUENCE [LARGE SCALE GENOMIC DNA]</scope>
    <scope>GENOME REANNOTATION</scope>
    <source>
        <strain>ATCC BAA-935 / AF2122/97</strain>
    </source>
</reference>
<keyword id="KW-0067">ATP-binding</keyword>
<keyword id="KW-0436">Ligase</keyword>
<keyword id="KW-0520">NAD</keyword>
<keyword id="KW-0547">Nucleotide-binding</keyword>
<keyword id="KW-1185">Reference proteome</keyword>
<evidence type="ECO:0000255" key="1">
    <source>
        <dbReference type="HAMAP-Rule" id="MF_02090"/>
    </source>
</evidence>
<evidence type="ECO:0000255" key="2">
    <source>
        <dbReference type="PROSITE-ProRule" id="PRU00054"/>
    </source>
</evidence>
<evidence type="ECO:0000256" key="3">
    <source>
        <dbReference type="SAM" id="MobiDB-lite"/>
    </source>
</evidence>
<evidence type="ECO:0000305" key="4"/>
<accession>P0A5L7</accession>
<accession>A0A1R3Y178</accession>
<accession>P71911</accession>
<accession>X2BKQ4</accession>
<name>NADE_MYCBO</name>
<protein>
    <recommendedName>
        <fullName evidence="1">Glutamine-dependent NAD(+) synthetase</fullName>
        <ecNumber evidence="1">6.3.5.1</ecNumber>
    </recommendedName>
    <alternativeName>
        <fullName evidence="1">NAD(+) synthase [glutamine-hydrolyzing]</fullName>
    </alternativeName>
</protein>
<organism>
    <name type="scientific">Mycobacterium bovis (strain ATCC BAA-935 / AF2122/97)</name>
    <dbReference type="NCBI Taxonomy" id="233413"/>
    <lineage>
        <taxon>Bacteria</taxon>
        <taxon>Bacillati</taxon>
        <taxon>Actinomycetota</taxon>
        <taxon>Actinomycetes</taxon>
        <taxon>Mycobacteriales</taxon>
        <taxon>Mycobacteriaceae</taxon>
        <taxon>Mycobacterium</taxon>
        <taxon>Mycobacterium tuberculosis complex</taxon>
    </lineage>
</organism>
<dbReference type="EC" id="6.3.5.1" evidence="1"/>
<dbReference type="EMBL" id="LT708304">
    <property type="protein sequence ID" value="SIU01079.1"/>
    <property type="molecule type" value="Genomic_DNA"/>
</dbReference>
<dbReference type="RefSeq" id="NP_856111.1">
    <property type="nucleotide sequence ID" value="NC_002945.3"/>
</dbReference>
<dbReference type="SMR" id="P0A5L7"/>
<dbReference type="KEGG" id="mbo:BQ2027_MB2464C"/>
<dbReference type="PATRIC" id="fig|233413.5.peg.2712"/>
<dbReference type="UniPathway" id="UPA00253">
    <property type="reaction ID" value="UER00334"/>
</dbReference>
<dbReference type="Proteomes" id="UP000001419">
    <property type="component" value="Chromosome"/>
</dbReference>
<dbReference type="GO" id="GO:0005737">
    <property type="term" value="C:cytoplasm"/>
    <property type="evidence" value="ECO:0007669"/>
    <property type="project" value="InterPro"/>
</dbReference>
<dbReference type="GO" id="GO:0005524">
    <property type="term" value="F:ATP binding"/>
    <property type="evidence" value="ECO:0007669"/>
    <property type="project" value="UniProtKB-UniRule"/>
</dbReference>
<dbReference type="GO" id="GO:0004359">
    <property type="term" value="F:glutaminase activity"/>
    <property type="evidence" value="ECO:0007669"/>
    <property type="project" value="InterPro"/>
</dbReference>
<dbReference type="GO" id="GO:0003952">
    <property type="term" value="F:NAD+ synthase (glutamine-hydrolyzing) activity"/>
    <property type="evidence" value="ECO:0007669"/>
    <property type="project" value="UniProtKB-EC"/>
</dbReference>
<dbReference type="GO" id="GO:0008795">
    <property type="term" value="F:NAD+ synthase activity"/>
    <property type="evidence" value="ECO:0007669"/>
    <property type="project" value="UniProtKB-UniRule"/>
</dbReference>
<dbReference type="GO" id="GO:0009435">
    <property type="term" value="P:NAD biosynthetic process"/>
    <property type="evidence" value="ECO:0007669"/>
    <property type="project" value="UniProtKB-UniRule"/>
</dbReference>
<dbReference type="CDD" id="cd07570">
    <property type="entry name" value="GAT_Gln-NAD-synth"/>
    <property type="match status" value="1"/>
</dbReference>
<dbReference type="CDD" id="cd00553">
    <property type="entry name" value="NAD_synthase"/>
    <property type="match status" value="1"/>
</dbReference>
<dbReference type="FunFam" id="1.10.10.1140:FF:000001">
    <property type="entry name" value="Glutamine-dependent NAD(+) synthetase"/>
    <property type="match status" value="1"/>
</dbReference>
<dbReference type="FunFam" id="3.40.50.620:FF:000155">
    <property type="entry name" value="Glutamine-dependent NAD(+) synthetase"/>
    <property type="match status" value="1"/>
</dbReference>
<dbReference type="FunFam" id="3.60.110.10:FF:000020">
    <property type="entry name" value="Glutamine-dependent NAD(+) synthetase"/>
    <property type="match status" value="1"/>
</dbReference>
<dbReference type="Gene3D" id="3.60.110.10">
    <property type="entry name" value="Carbon-nitrogen hydrolase"/>
    <property type="match status" value="1"/>
</dbReference>
<dbReference type="Gene3D" id="1.10.10.1140">
    <property type="entry name" value="Glutamine-dependent NAD+ synthetase, C-terminal domain"/>
    <property type="match status" value="1"/>
</dbReference>
<dbReference type="Gene3D" id="3.40.50.620">
    <property type="entry name" value="HUPs"/>
    <property type="match status" value="1"/>
</dbReference>
<dbReference type="HAMAP" id="MF_02090">
    <property type="entry name" value="NadE_glutamine_dep"/>
    <property type="match status" value="1"/>
</dbReference>
<dbReference type="InterPro" id="IPR003010">
    <property type="entry name" value="C-N_Hydrolase"/>
</dbReference>
<dbReference type="InterPro" id="IPR036526">
    <property type="entry name" value="C-N_Hydrolase_sf"/>
</dbReference>
<dbReference type="InterPro" id="IPR014445">
    <property type="entry name" value="Gln-dep_NAD_synthase"/>
</dbReference>
<dbReference type="InterPro" id="IPR041856">
    <property type="entry name" value="NAD+_synth_C"/>
</dbReference>
<dbReference type="InterPro" id="IPR022310">
    <property type="entry name" value="NAD/GMP_synthase"/>
</dbReference>
<dbReference type="InterPro" id="IPR003694">
    <property type="entry name" value="NAD_synthase"/>
</dbReference>
<dbReference type="InterPro" id="IPR014729">
    <property type="entry name" value="Rossmann-like_a/b/a_fold"/>
</dbReference>
<dbReference type="NCBIfam" id="NF002730">
    <property type="entry name" value="PRK02628.1"/>
    <property type="match status" value="1"/>
</dbReference>
<dbReference type="PANTHER" id="PTHR23090:SF9">
    <property type="entry name" value="GLUTAMINE-DEPENDENT NAD(+) SYNTHETASE"/>
    <property type="match status" value="1"/>
</dbReference>
<dbReference type="PANTHER" id="PTHR23090">
    <property type="entry name" value="NH 3 /GLUTAMINE-DEPENDENT NAD + SYNTHETASE"/>
    <property type="match status" value="1"/>
</dbReference>
<dbReference type="Pfam" id="PF00795">
    <property type="entry name" value="CN_hydrolase"/>
    <property type="match status" value="1"/>
</dbReference>
<dbReference type="Pfam" id="PF02540">
    <property type="entry name" value="NAD_synthase"/>
    <property type="match status" value="1"/>
</dbReference>
<dbReference type="PIRSF" id="PIRSF006630">
    <property type="entry name" value="NADS_GAT"/>
    <property type="match status" value="1"/>
</dbReference>
<dbReference type="SUPFAM" id="SSF52402">
    <property type="entry name" value="Adenine nucleotide alpha hydrolases-like"/>
    <property type="match status" value="1"/>
</dbReference>
<dbReference type="SUPFAM" id="SSF56317">
    <property type="entry name" value="Carbon-nitrogen hydrolase"/>
    <property type="match status" value="1"/>
</dbReference>
<dbReference type="PROSITE" id="PS50263">
    <property type="entry name" value="CN_HYDROLASE"/>
    <property type="match status" value="1"/>
</dbReference>
<gene>
    <name evidence="1" type="primary">nadE</name>
    <name type="ordered locus">BQ2027_MB2464C</name>
</gene>
<comment type="function">
    <text evidence="1">Catalyzes the ATP-dependent amidation of deamido-NAD to form NAD. Uses L-glutamine as a nitrogen source.</text>
</comment>
<comment type="catalytic activity">
    <reaction evidence="1">
        <text>deamido-NAD(+) + L-glutamine + ATP + H2O = L-glutamate + AMP + diphosphate + NAD(+) + H(+)</text>
        <dbReference type="Rhea" id="RHEA:24384"/>
        <dbReference type="ChEBI" id="CHEBI:15377"/>
        <dbReference type="ChEBI" id="CHEBI:15378"/>
        <dbReference type="ChEBI" id="CHEBI:29985"/>
        <dbReference type="ChEBI" id="CHEBI:30616"/>
        <dbReference type="ChEBI" id="CHEBI:33019"/>
        <dbReference type="ChEBI" id="CHEBI:57540"/>
        <dbReference type="ChEBI" id="CHEBI:58359"/>
        <dbReference type="ChEBI" id="CHEBI:58437"/>
        <dbReference type="ChEBI" id="CHEBI:456215"/>
        <dbReference type="EC" id="6.3.5.1"/>
    </reaction>
</comment>
<comment type="pathway">
    <text evidence="1">Cofactor biosynthesis; NAD(+) biosynthesis; NAD(+) from deamido-NAD(+) (L-Gln route): step 1/1.</text>
</comment>
<comment type="similarity">
    <text evidence="1 4">In the C-terminal section; belongs to the NAD synthetase family.</text>
</comment>
<proteinExistence type="inferred from homology"/>
<sequence>MNFYSAYQHGFVRVAACTHHTTIGDPAANAASVLDMARACHDDGAALAVFPELTLSGYSIEDVLLQDSLLDAVEDALLDLVTESADLLPVLVVGAPLRHRHRIYNTAVVIHRGAVLGVVPKSYLPTYREFYERRQMAPGDGERGTIRIGGADVAFGTDLLFAASDLPGFVLHVEICEDMFVPMPPSAEAALAGATVLANLSGSPITIGRAEDRRLLARSASARCLAAYVYAAAGEGESTTDLAWDGQTMIWENGALLAESERFPKGVRRSVADVDTELLRSERLRMGTFDDNRRHHRELTESFRRIDFALDPPAGDIGLLREVERFPFVPADPQRLQQDCYEAYNIQVSGLEQRLRALDYPKVVIGVSGGLDSTHALIVATHAMDREGRPRSDILAFALPGFATGEHTKNNAIKLARALGVTFSEIDIGDTARLMLHTIGHPYSVGEKVYDVTFENVQAGLRTDYLFRIANQRGGIVLGTGDLSELALGWSTYGVGDQMSHYNVNAGVPKTLIQHLIRWVISAGEFGEKVGEVLQSVLDTEITPELIPTGEEELQSSEAKVGPFALQDFSLFQVLRYGFRPSKIAFLAWHAWNDAERGNWPPGFPKSERPSYSLAEIRHWLQIFVQRFYSFSQFKRSALPNGPKVSHGGALSPRGDWRAPSDMSARIWLDQIDREVPKG</sequence>
<feature type="chain" id="PRO_0000152242" description="Glutamine-dependent NAD(+) synthetase">
    <location>
        <begin position="1"/>
        <end position="679"/>
    </location>
</feature>
<feature type="domain" description="CN hydrolase" evidence="2">
    <location>
        <begin position="12"/>
        <end position="276"/>
    </location>
</feature>
<feature type="region of interest" description="Ligase">
    <location>
        <begin position="337"/>
        <end position="679"/>
    </location>
</feature>
<feature type="region of interest" description="Disordered" evidence="3">
    <location>
        <begin position="639"/>
        <end position="658"/>
    </location>
</feature>
<feature type="active site" description="Proton acceptor; for glutaminase activity" evidence="1">
    <location>
        <position position="52"/>
    </location>
</feature>
<feature type="active site" description="For glutaminase activity" evidence="1">
    <location>
        <position position="121"/>
    </location>
</feature>
<feature type="active site" description="Nucleophile; for glutaminase activity" evidence="1">
    <location>
        <position position="176"/>
    </location>
</feature>
<feature type="binding site" evidence="1">
    <location>
        <position position="127"/>
    </location>
    <ligand>
        <name>L-glutamine</name>
        <dbReference type="ChEBI" id="CHEBI:58359"/>
    </ligand>
</feature>
<feature type="binding site" evidence="1">
    <location>
        <position position="203"/>
    </location>
    <ligand>
        <name>L-glutamine</name>
        <dbReference type="ChEBI" id="CHEBI:58359"/>
    </ligand>
</feature>
<feature type="binding site" evidence="1">
    <location>
        <position position="209"/>
    </location>
    <ligand>
        <name>L-glutamine</name>
        <dbReference type="ChEBI" id="CHEBI:58359"/>
    </ligand>
</feature>
<feature type="binding site" evidence="1">
    <location>
        <begin position="366"/>
        <end position="373"/>
    </location>
    <ligand>
        <name>ATP</name>
        <dbReference type="ChEBI" id="CHEBI:30616"/>
    </ligand>
</feature>
<feature type="binding site" evidence="1">
    <location>
        <position position="456"/>
    </location>
    <ligand>
        <name>deamido-NAD(+)</name>
        <dbReference type="ChEBI" id="CHEBI:58437"/>
    </ligand>
</feature>
<feature type="binding site" evidence="1">
    <location>
        <position position="480"/>
    </location>
    <ligand>
        <name>ATP</name>
        <dbReference type="ChEBI" id="CHEBI:30616"/>
    </ligand>
</feature>
<feature type="binding site" evidence="1">
    <location>
        <position position="485"/>
    </location>
    <ligand>
        <name>deamido-NAD(+)</name>
        <dbReference type="ChEBI" id="CHEBI:58437"/>
    </ligand>
</feature>
<feature type="binding site" evidence="1">
    <location>
        <begin position="490"/>
        <end position="493"/>
    </location>
    <ligand>
        <name>deamido-NAD(+)</name>
        <dbReference type="ChEBI" id="CHEBI:58437"/>
    </ligand>
</feature>
<feature type="binding site" evidence="1">
    <location>
        <position position="635"/>
    </location>
    <ligand>
        <name>deamido-NAD(+)</name>
        <dbReference type="ChEBI" id="CHEBI:58437"/>
    </ligand>
</feature>